<evidence type="ECO:0000250" key="1"/>
<evidence type="ECO:0000305" key="2"/>
<feature type="chain" id="PRO_0000186343" description="Bifunctional dihydrofolate reductase-thymidylate synthase">
    <location>
        <begin position="1"/>
        <end position="515"/>
    </location>
</feature>
<feature type="domain" description="DHFR">
    <location>
        <begin position="26"/>
        <end position="228"/>
    </location>
</feature>
<feature type="region of interest" description="Thymidylate synthase">
    <location>
        <begin position="233"/>
        <end position="515"/>
    </location>
</feature>
<feature type="active site" evidence="1">
    <location>
        <position position="395"/>
    </location>
</feature>
<feature type="binding site" evidence="1">
    <location>
        <position position="30"/>
    </location>
    <ligand>
        <name>substrate</name>
    </ligand>
</feature>
<feature type="binding site" evidence="1">
    <location>
        <position position="32"/>
    </location>
    <ligand>
        <name>NADP(+)</name>
        <dbReference type="ChEBI" id="CHEBI:58349"/>
    </ligand>
</feature>
<feature type="binding site" evidence="1">
    <location>
        <begin position="38"/>
        <end position="44"/>
    </location>
    <ligand>
        <name>NADP(+)</name>
        <dbReference type="ChEBI" id="CHEBI:58349"/>
    </ligand>
</feature>
<feature type="binding site" evidence="1">
    <location>
        <begin position="81"/>
        <end position="83"/>
    </location>
    <ligand>
        <name>NADP(+)</name>
        <dbReference type="ChEBI" id="CHEBI:58349"/>
    </ligand>
</feature>
<feature type="binding site" evidence="1">
    <location>
        <begin position="101"/>
        <end position="104"/>
    </location>
    <ligand>
        <name>NADP(+)</name>
        <dbReference type="ChEBI" id="CHEBI:58349"/>
    </ligand>
</feature>
<feature type="binding site" evidence="1">
    <location>
        <position position="154"/>
    </location>
    <ligand>
        <name>substrate</name>
    </ligand>
</feature>
<feature type="binding site" evidence="1">
    <location>
        <begin position="155"/>
        <end position="162"/>
    </location>
    <ligand>
        <name>NADP(+)</name>
        <dbReference type="ChEBI" id="CHEBI:58349"/>
    </ligand>
</feature>
<feature type="binding site" evidence="1">
    <location>
        <position position="160"/>
    </location>
    <ligand>
        <name>substrate</name>
    </ligand>
</feature>
<feature type="binding site" evidence="1">
    <location>
        <position position="178"/>
    </location>
    <ligand>
        <name>substrate</name>
    </ligand>
</feature>
<feature type="binding site" evidence="1">
    <location>
        <position position="253"/>
    </location>
    <ligand>
        <name>dUMP</name>
        <dbReference type="ChEBI" id="CHEBI:246422"/>
    </ligand>
</feature>
<feature type="binding site" evidence="1">
    <location>
        <position position="396"/>
    </location>
    <ligand>
        <name>dUMP</name>
        <dbReference type="ChEBI" id="CHEBI:246422"/>
    </ligand>
</feature>
<feature type="binding site" evidence="1">
    <location>
        <begin position="416"/>
        <end position="420"/>
    </location>
    <ligand>
        <name>dUMP</name>
        <dbReference type="ChEBI" id="CHEBI:246422"/>
    </ligand>
</feature>
<feature type="binding site" evidence="1">
    <location>
        <position position="428"/>
    </location>
    <ligand>
        <name>dUMP</name>
        <dbReference type="ChEBI" id="CHEBI:246422"/>
    </ligand>
</feature>
<feature type="binding site" evidence="1">
    <location>
        <begin position="458"/>
        <end position="460"/>
    </location>
    <ligand>
        <name>dUMP</name>
        <dbReference type="ChEBI" id="CHEBI:246422"/>
    </ligand>
</feature>
<proteinExistence type="inferred from homology"/>
<organism>
    <name type="scientific">Crithidia fasciculata</name>
    <dbReference type="NCBI Taxonomy" id="5656"/>
    <lineage>
        <taxon>Eukaryota</taxon>
        <taxon>Discoba</taxon>
        <taxon>Euglenozoa</taxon>
        <taxon>Kinetoplastea</taxon>
        <taxon>Metakinetoplastina</taxon>
        <taxon>Trypanosomatida</taxon>
        <taxon>Trypanosomatidae</taxon>
        <taxon>Leishmaniinae</taxon>
        <taxon>Crithidia</taxon>
    </lineage>
</organism>
<accession>Q23695</accession>
<keyword id="KW-0489">Methyltransferase</keyword>
<keyword id="KW-0511">Multifunctional enzyme</keyword>
<keyword id="KW-0521">NADP</keyword>
<keyword id="KW-0545">Nucleotide biosynthesis</keyword>
<keyword id="KW-0554">One-carbon metabolism</keyword>
<keyword id="KW-0560">Oxidoreductase</keyword>
<keyword id="KW-0808">Transferase</keyword>
<protein>
    <recommendedName>
        <fullName>Bifunctional dihydrofolate reductase-thymidylate synthase</fullName>
        <shortName>DHFR-TS</shortName>
    </recommendedName>
    <domain>
        <recommendedName>
            <fullName>Dihydrofolate reductase</fullName>
            <ecNumber>1.5.1.3</ecNumber>
        </recommendedName>
    </domain>
    <domain>
        <recommendedName>
            <fullName>Thymidylate synthase</fullName>
            <ecNumber>2.1.1.45</ecNumber>
        </recommendedName>
    </domain>
</protein>
<sequence>MSRAAAKFKIPMPVTKADFAFPSLRAFSIVVAADQQHGIGDGETIPWTVPETLAFFKDQTTLLRNKKPPTEKKRNAVVMGRKTWEVPLKFRPLKGRLNVVLSCRRPVDDLLAQLPEEKRAAAAADVVINGGLKEALHLLARPPYCSSIETAYCIGGARVYTEAMQSPCVEKLKEVYLTRVHTAPTCNRFYEFVRRRRARAAVDLESTSGVKVSDAAAHLSYEIMKYVPHNAEERQYLELIDRIMKTGLVKEDRTGVGTISLFGAQMFSLRDNQLPLLTTKRVFWRGVCEELIWFLRGETNAHVLADKDIHIWDGNGSREFLDSRGLTENKEMDLGPVYGFQWRHFGADYKGFDANYDEGVDQIKTIVETLKTNDRRLLVTAWNPCALHKMAVRPCHLLGQFYVNTQTKELSCMLYQRCCDMGLGVPFNIASYALLTILIAKATGLRPGELVHTLGTAHVYSNHVEALKEQLQRVPVAFPVLVFKKEREFLEDYESTDMEVVDYVPYPPIKMEMAV</sequence>
<dbReference type="EC" id="1.5.1.3"/>
<dbReference type="EC" id="2.1.1.45"/>
<dbReference type="EMBL" id="M22852">
    <property type="protein sequence ID" value="AAA30318.1"/>
    <property type="molecule type" value="Genomic_DNA"/>
</dbReference>
<dbReference type="SMR" id="Q23695"/>
<dbReference type="VEuPathDB" id="TriTrypDB:CFAC1_180026900"/>
<dbReference type="SABIO-RK" id="Q23695"/>
<dbReference type="UniPathway" id="UPA00077">
    <property type="reaction ID" value="UER00158"/>
</dbReference>
<dbReference type="GO" id="GO:0005829">
    <property type="term" value="C:cytosol"/>
    <property type="evidence" value="ECO:0007669"/>
    <property type="project" value="TreeGrafter"/>
</dbReference>
<dbReference type="GO" id="GO:0005739">
    <property type="term" value="C:mitochondrion"/>
    <property type="evidence" value="ECO:0007669"/>
    <property type="project" value="TreeGrafter"/>
</dbReference>
<dbReference type="GO" id="GO:0004146">
    <property type="term" value="F:dihydrofolate reductase activity"/>
    <property type="evidence" value="ECO:0007669"/>
    <property type="project" value="UniProtKB-EC"/>
</dbReference>
<dbReference type="GO" id="GO:0004799">
    <property type="term" value="F:thymidylate synthase activity"/>
    <property type="evidence" value="ECO:0007669"/>
    <property type="project" value="UniProtKB-EC"/>
</dbReference>
<dbReference type="GO" id="GO:0006231">
    <property type="term" value="P:dTMP biosynthetic process"/>
    <property type="evidence" value="ECO:0007669"/>
    <property type="project" value="InterPro"/>
</dbReference>
<dbReference type="GO" id="GO:0032259">
    <property type="term" value="P:methylation"/>
    <property type="evidence" value="ECO:0007669"/>
    <property type="project" value="UniProtKB-KW"/>
</dbReference>
<dbReference type="GO" id="GO:0006730">
    <property type="term" value="P:one-carbon metabolic process"/>
    <property type="evidence" value="ECO:0007669"/>
    <property type="project" value="UniProtKB-KW"/>
</dbReference>
<dbReference type="GO" id="GO:0046654">
    <property type="term" value="P:tetrahydrofolate biosynthetic process"/>
    <property type="evidence" value="ECO:0007669"/>
    <property type="project" value="UniProtKB-UniPathway"/>
</dbReference>
<dbReference type="CDD" id="cd00209">
    <property type="entry name" value="DHFR"/>
    <property type="match status" value="1"/>
</dbReference>
<dbReference type="CDD" id="cd00351">
    <property type="entry name" value="TS_Pyrimidine_HMase"/>
    <property type="match status" value="1"/>
</dbReference>
<dbReference type="FunFam" id="3.30.572.10:FF:000013">
    <property type="entry name" value="Thymidylate synthase"/>
    <property type="match status" value="1"/>
</dbReference>
<dbReference type="Gene3D" id="3.40.430.10">
    <property type="entry name" value="Dihydrofolate Reductase, subunit A"/>
    <property type="match status" value="1"/>
</dbReference>
<dbReference type="Gene3D" id="3.30.572.10">
    <property type="entry name" value="Thymidylate synthase/dCMP hydroxymethylase domain"/>
    <property type="match status" value="1"/>
</dbReference>
<dbReference type="HAMAP" id="MF_00008">
    <property type="entry name" value="Thymidy_synth_bact"/>
    <property type="match status" value="1"/>
</dbReference>
<dbReference type="InterPro" id="IPR024072">
    <property type="entry name" value="DHFR-like_dom_sf"/>
</dbReference>
<dbReference type="InterPro" id="IPR012262">
    <property type="entry name" value="DHFR-TS"/>
</dbReference>
<dbReference type="InterPro" id="IPR001796">
    <property type="entry name" value="DHFR_dom"/>
</dbReference>
<dbReference type="InterPro" id="IPR045097">
    <property type="entry name" value="Thymidate_synth/dCMP_Mease"/>
</dbReference>
<dbReference type="InterPro" id="IPR023451">
    <property type="entry name" value="Thymidate_synth/dCMP_Mease_dom"/>
</dbReference>
<dbReference type="InterPro" id="IPR036926">
    <property type="entry name" value="Thymidate_synth/dCMP_Mease_sf"/>
</dbReference>
<dbReference type="InterPro" id="IPR000398">
    <property type="entry name" value="Thymidylate_synthase"/>
</dbReference>
<dbReference type="InterPro" id="IPR020940">
    <property type="entry name" value="Thymidylate_synthase_AS"/>
</dbReference>
<dbReference type="NCBIfam" id="TIGR03284">
    <property type="entry name" value="thym_sym"/>
    <property type="match status" value="1"/>
</dbReference>
<dbReference type="PANTHER" id="PTHR11548:SF2">
    <property type="entry name" value="THYMIDYLATE SYNTHASE"/>
    <property type="match status" value="1"/>
</dbReference>
<dbReference type="PANTHER" id="PTHR11548">
    <property type="entry name" value="THYMIDYLATE SYNTHASE 1"/>
    <property type="match status" value="1"/>
</dbReference>
<dbReference type="Pfam" id="PF00186">
    <property type="entry name" value="DHFR_1"/>
    <property type="match status" value="1"/>
</dbReference>
<dbReference type="Pfam" id="PF00303">
    <property type="entry name" value="Thymidylat_synt"/>
    <property type="match status" value="1"/>
</dbReference>
<dbReference type="PIRSF" id="PIRSF000389">
    <property type="entry name" value="DHFR-TS"/>
    <property type="match status" value="1"/>
</dbReference>
<dbReference type="PRINTS" id="PR00108">
    <property type="entry name" value="THYMDSNTHASE"/>
</dbReference>
<dbReference type="SUPFAM" id="SSF53597">
    <property type="entry name" value="Dihydrofolate reductase-like"/>
    <property type="match status" value="1"/>
</dbReference>
<dbReference type="SUPFAM" id="SSF55831">
    <property type="entry name" value="Thymidylate synthase/dCMP hydroxymethylase"/>
    <property type="match status" value="1"/>
</dbReference>
<dbReference type="PROSITE" id="PS51330">
    <property type="entry name" value="DHFR_2"/>
    <property type="match status" value="1"/>
</dbReference>
<dbReference type="PROSITE" id="PS00091">
    <property type="entry name" value="THYMIDYLATE_SYNTHASE"/>
    <property type="match status" value="1"/>
</dbReference>
<name>DRTS_CRIFA</name>
<comment type="function">
    <text evidence="1">Bifunctional enzyme. Involved in de novo dTMP biosynthesis. Key enzyme in folate metabolism. Catalyzes an essential reaction for de novo glycine and purine synthesis, DNA precursor synthesis, and for the conversion of dUMP to dTMP (By similarity).</text>
</comment>
<comment type="catalytic activity">
    <reaction>
        <text>(6S)-5,6,7,8-tetrahydrofolate + NADP(+) = 7,8-dihydrofolate + NADPH + H(+)</text>
        <dbReference type="Rhea" id="RHEA:15009"/>
        <dbReference type="ChEBI" id="CHEBI:15378"/>
        <dbReference type="ChEBI" id="CHEBI:57451"/>
        <dbReference type="ChEBI" id="CHEBI:57453"/>
        <dbReference type="ChEBI" id="CHEBI:57783"/>
        <dbReference type="ChEBI" id="CHEBI:58349"/>
        <dbReference type="EC" id="1.5.1.3"/>
    </reaction>
</comment>
<comment type="catalytic activity">
    <reaction>
        <text>dUMP + (6R)-5,10-methylene-5,6,7,8-tetrahydrofolate = 7,8-dihydrofolate + dTMP</text>
        <dbReference type="Rhea" id="RHEA:12104"/>
        <dbReference type="ChEBI" id="CHEBI:15636"/>
        <dbReference type="ChEBI" id="CHEBI:57451"/>
        <dbReference type="ChEBI" id="CHEBI:63528"/>
        <dbReference type="ChEBI" id="CHEBI:246422"/>
        <dbReference type="EC" id="2.1.1.45"/>
    </reaction>
</comment>
<comment type="pathway">
    <text>Cofactor biosynthesis; tetrahydrofolate biosynthesis; 5,6,7,8-tetrahydrofolate from 7,8-dihydrofolate: step 1/1.</text>
</comment>
<comment type="similarity">
    <text evidence="2">In the N-terminal section; belongs to the dihydrofolate reductase family.</text>
</comment>
<comment type="similarity">
    <text evidence="2">In the C-terminal section; belongs to the thymidylate synthase family.</text>
</comment>
<reference key="1">
    <citation type="journal article" date="1989" name="Mol. Biochem. Parasitol.">
        <title>Structure, genomic organization and transcription of the bifunctional dihydrofolate reductase-thymidylate synthase gene from Crithidia fasciculata.</title>
        <authorList>
            <person name="Hughes D.E."/>
            <person name="Shonekan O.A."/>
            <person name="Simpson L."/>
        </authorList>
    </citation>
    <scope>NUCLEOTIDE SEQUENCE [GENOMIC DNA]</scope>
</reference>